<feature type="chain" id="PRO_0000151601" description="Arginine--tRNA ligase">
    <location>
        <begin position="1"/>
        <end position="577"/>
    </location>
</feature>
<feature type="short sequence motif" description="'HIGH' region">
    <location>
        <begin position="124"/>
        <end position="132"/>
    </location>
</feature>
<name>SYR_SALTI</name>
<sequence>MNIQALLSEKVSQAMIAAGAPADCEPQVRQSAKVQFGDYQANGMMAVAKKLGMAPRQLAEQVLTHLDLSGIASKVEIAGPGFINIFLEPAFLAEQVQQALTSDRLGVSQPTRQTIVVDYSAPNVAKEMHVGHLRSTIIGDAAVRTLEFLGHHVIRANHVGDWGTQFGMLIAWLEKQQQENAGDMALADLEGFYRDAKKHYDEDETFAERARNYVVKLQSGDTYFREMWRKLVDITMTQNQITYDRLNVTLTRDDVMGESLYNPMLPGIVADLKAKGLAVESEGATVVFLDEFKNKEGDPMGVIIQKKDGGYLYTTTDIACAKYRYETLHADRVLYYIDSRQHQHLMQAWTIVRKAGYVPDSVPLEHHMFGMMLGKDGKPFKTRTGGTVKLADLLDEALERARRLVAEKNPDMPADELEKLANAVGIGAVKYADLSKNRTTDYIFDWDNMLAFEGNTAPYMQYAYTRVLSVFRKADIDEQALASAPVIISEDREAQLAARLLQFEETLTVVAREGTPHVMCAYLYDVAGLFSGFYEHCPILSAENDAVRNSRLKLAQLTAKTLKLGLDTLGIETVERM</sequence>
<comment type="catalytic activity">
    <reaction evidence="1">
        <text>tRNA(Arg) + L-arginine + ATP = L-arginyl-tRNA(Arg) + AMP + diphosphate</text>
        <dbReference type="Rhea" id="RHEA:20301"/>
        <dbReference type="Rhea" id="RHEA-COMP:9658"/>
        <dbReference type="Rhea" id="RHEA-COMP:9673"/>
        <dbReference type="ChEBI" id="CHEBI:30616"/>
        <dbReference type="ChEBI" id="CHEBI:32682"/>
        <dbReference type="ChEBI" id="CHEBI:33019"/>
        <dbReference type="ChEBI" id="CHEBI:78442"/>
        <dbReference type="ChEBI" id="CHEBI:78513"/>
        <dbReference type="ChEBI" id="CHEBI:456215"/>
        <dbReference type="EC" id="6.1.1.19"/>
    </reaction>
</comment>
<comment type="subunit">
    <text evidence="1">Monomer.</text>
</comment>
<comment type="subcellular location">
    <subcellularLocation>
        <location evidence="1">Cytoplasm</location>
    </subcellularLocation>
</comment>
<comment type="similarity">
    <text evidence="1">Belongs to the class-I aminoacyl-tRNA synthetase family.</text>
</comment>
<reference key="1">
    <citation type="journal article" date="2001" name="Nature">
        <title>Complete genome sequence of a multiple drug resistant Salmonella enterica serovar Typhi CT18.</title>
        <authorList>
            <person name="Parkhill J."/>
            <person name="Dougan G."/>
            <person name="James K.D."/>
            <person name="Thomson N.R."/>
            <person name="Pickard D."/>
            <person name="Wain J."/>
            <person name="Churcher C.M."/>
            <person name="Mungall K.L."/>
            <person name="Bentley S.D."/>
            <person name="Holden M.T.G."/>
            <person name="Sebaihia M."/>
            <person name="Baker S."/>
            <person name="Basham D."/>
            <person name="Brooks K."/>
            <person name="Chillingworth T."/>
            <person name="Connerton P."/>
            <person name="Cronin A."/>
            <person name="Davis P."/>
            <person name="Davies R.M."/>
            <person name="Dowd L."/>
            <person name="White N."/>
            <person name="Farrar J."/>
            <person name="Feltwell T."/>
            <person name="Hamlin N."/>
            <person name="Haque A."/>
            <person name="Hien T.T."/>
            <person name="Holroyd S."/>
            <person name="Jagels K."/>
            <person name="Krogh A."/>
            <person name="Larsen T.S."/>
            <person name="Leather S."/>
            <person name="Moule S."/>
            <person name="O'Gaora P."/>
            <person name="Parry C."/>
            <person name="Quail M.A."/>
            <person name="Rutherford K.M."/>
            <person name="Simmonds M."/>
            <person name="Skelton J."/>
            <person name="Stevens K."/>
            <person name="Whitehead S."/>
            <person name="Barrell B.G."/>
        </authorList>
    </citation>
    <scope>NUCLEOTIDE SEQUENCE [LARGE SCALE GENOMIC DNA]</scope>
    <source>
        <strain>CT18</strain>
    </source>
</reference>
<reference key="2">
    <citation type="journal article" date="2003" name="J. Bacteriol.">
        <title>Comparative genomics of Salmonella enterica serovar Typhi strains Ty2 and CT18.</title>
        <authorList>
            <person name="Deng W."/>
            <person name="Liou S.-R."/>
            <person name="Plunkett G. III"/>
            <person name="Mayhew G.F."/>
            <person name="Rose D.J."/>
            <person name="Burland V."/>
            <person name="Kodoyianni V."/>
            <person name="Schwartz D.C."/>
            <person name="Blattner F.R."/>
        </authorList>
    </citation>
    <scope>NUCLEOTIDE SEQUENCE [LARGE SCALE GENOMIC DNA]</scope>
    <source>
        <strain>ATCC 700931 / Ty2</strain>
    </source>
</reference>
<keyword id="KW-0030">Aminoacyl-tRNA synthetase</keyword>
<keyword id="KW-0067">ATP-binding</keyword>
<keyword id="KW-0963">Cytoplasm</keyword>
<keyword id="KW-0436">Ligase</keyword>
<keyword id="KW-0547">Nucleotide-binding</keyword>
<keyword id="KW-0648">Protein biosynthesis</keyword>
<gene>
    <name evidence="1" type="primary">argS</name>
    <name type="ordered locus">STY2117</name>
    <name type="ordered locus">t0968</name>
</gene>
<proteinExistence type="inferred from homology"/>
<dbReference type="EC" id="6.1.1.19" evidence="1"/>
<dbReference type="EMBL" id="AL513382">
    <property type="protein sequence ID" value="CAD05660.1"/>
    <property type="molecule type" value="Genomic_DNA"/>
</dbReference>
<dbReference type="EMBL" id="AE014613">
    <property type="protein sequence ID" value="AAO68640.1"/>
    <property type="molecule type" value="Genomic_DNA"/>
</dbReference>
<dbReference type="RefSeq" id="NP_456476.1">
    <property type="nucleotide sequence ID" value="NC_003198.1"/>
</dbReference>
<dbReference type="RefSeq" id="WP_001025371.1">
    <property type="nucleotide sequence ID" value="NZ_WSUR01000004.1"/>
</dbReference>
<dbReference type="SMR" id="Q8Z5V7"/>
<dbReference type="STRING" id="220341.gene:17586025"/>
<dbReference type="KEGG" id="stt:t0968"/>
<dbReference type="KEGG" id="sty:STY2117"/>
<dbReference type="PATRIC" id="fig|220341.7.peg.2128"/>
<dbReference type="eggNOG" id="COG0018">
    <property type="taxonomic scope" value="Bacteria"/>
</dbReference>
<dbReference type="HOGENOM" id="CLU_006406_5_1_6"/>
<dbReference type="OMA" id="NKPLHLG"/>
<dbReference type="OrthoDB" id="9803211at2"/>
<dbReference type="Proteomes" id="UP000000541">
    <property type="component" value="Chromosome"/>
</dbReference>
<dbReference type="Proteomes" id="UP000002670">
    <property type="component" value="Chromosome"/>
</dbReference>
<dbReference type="GO" id="GO:0005737">
    <property type="term" value="C:cytoplasm"/>
    <property type="evidence" value="ECO:0007669"/>
    <property type="project" value="UniProtKB-SubCell"/>
</dbReference>
<dbReference type="GO" id="GO:0004814">
    <property type="term" value="F:arginine-tRNA ligase activity"/>
    <property type="evidence" value="ECO:0007669"/>
    <property type="project" value="UniProtKB-UniRule"/>
</dbReference>
<dbReference type="GO" id="GO:0005524">
    <property type="term" value="F:ATP binding"/>
    <property type="evidence" value="ECO:0007669"/>
    <property type="project" value="UniProtKB-UniRule"/>
</dbReference>
<dbReference type="GO" id="GO:0006420">
    <property type="term" value="P:arginyl-tRNA aminoacylation"/>
    <property type="evidence" value="ECO:0007669"/>
    <property type="project" value="UniProtKB-UniRule"/>
</dbReference>
<dbReference type="CDD" id="cd07956">
    <property type="entry name" value="Anticodon_Ia_Arg"/>
    <property type="match status" value="1"/>
</dbReference>
<dbReference type="CDD" id="cd00671">
    <property type="entry name" value="ArgRS_core"/>
    <property type="match status" value="1"/>
</dbReference>
<dbReference type="FunFam" id="1.10.730.10:FF:000001">
    <property type="entry name" value="Arginine--tRNA ligase"/>
    <property type="match status" value="1"/>
</dbReference>
<dbReference type="FunFam" id="3.30.1360.70:FF:000001">
    <property type="entry name" value="Arginine--tRNA ligase"/>
    <property type="match status" value="1"/>
</dbReference>
<dbReference type="FunFam" id="3.40.50.620:FF:000030">
    <property type="entry name" value="Arginine--tRNA ligase"/>
    <property type="match status" value="1"/>
</dbReference>
<dbReference type="Gene3D" id="3.30.1360.70">
    <property type="entry name" value="Arginyl tRNA synthetase N-terminal domain"/>
    <property type="match status" value="1"/>
</dbReference>
<dbReference type="Gene3D" id="3.40.50.620">
    <property type="entry name" value="HUPs"/>
    <property type="match status" value="1"/>
</dbReference>
<dbReference type="Gene3D" id="1.10.730.10">
    <property type="entry name" value="Isoleucyl-tRNA Synthetase, Domain 1"/>
    <property type="match status" value="1"/>
</dbReference>
<dbReference type="HAMAP" id="MF_00123">
    <property type="entry name" value="Arg_tRNA_synth"/>
    <property type="match status" value="1"/>
</dbReference>
<dbReference type="InterPro" id="IPR001412">
    <property type="entry name" value="aa-tRNA-synth_I_CS"/>
</dbReference>
<dbReference type="InterPro" id="IPR001278">
    <property type="entry name" value="Arg-tRNA-ligase"/>
</dbReference>
<dbReference type="InterPro" id="IPR005148">
    <property type="entry name" value="Arg-tRNA-synth_N"/>
</dbReference>
<dbReference type="InterPro" id="IPR036695">
    <property type="entry name" value="Arg-tRNA-synth_N_sf"/>
</dbReference>
<dbReference type="InterPro" id="IPR035684">
    <property type="entry name" value="ArgRS_core"/>
</dbReference>
<dbReference type="InterPro" id="IPR008909">
    <property type="entry name" value="DALR_anticod-bd"/>
</dbReference>
<dbReference type="InterPro" id="IPR014729">
    <property type="entry name" value="Rossmann-like_a/b/a_fold"/>
</dbReference>
<dbReference type="InterPro" id="IPR009080">
    <property type="entry name" value="tRNAsynth_Ia_anticodon-bd"/>
</dbReference>
<dbReference type="NCBIfam" id="TIGR00456">
    <property type="entry name" value="argS"/>
    <property type="match status" value="1"/>
</dbReference>
<dbReference type="PANTHER" id="PTHR11956:SF5">
    <property type="entry name" value="ARGININE--TRNA LIGASE, CYTOPLASMIC"/>
    <property type="match status" value="1"/>
</dbReference>
<dbReference type="PANTHER" id="PTHR11956">
    <property type="entry name" value="ARGINYL-TRNA SYNTHETASE"/>
    <property type="match status" value="1"/>
</dbReference>
<dbReference type="Pfam" id="PF03485">
    <property type="entry name" value="Arg_tRNA_synt_N"/>
    <property type="match status" value="1"/>
</dbReference>
<dbReference type="Pfam" id="PF05746">
    <property type="entry name" value="DALR_1"/>
    <property type="match status" value="1"/>
</dbReference>
<dbReference type="Pfam" id="PF00750">
    <property type="entry name" value="tRNA-synt_1d"/>
    <property type="match status" value="1"/>
</dbReference>
<dbReference type="PRINTS" id="PR01038">
    <property type="entry name" value="TRNASYNTHARG"/>
</dbReference>
<dbReference type="SMART" id="SM01016">
    <property type="entry name" value="Arg_tRNA_synt_N"/>
    <property type="match status" value="1"/>
</dbReference>
<dbReference type="SMART" id="SM00836">
    <property type="entry name" value="DALR_1"/>
    <property type="match status" value="1"/>
</dbReference>
<dbReference type="SUPFAM" id="SSF47323">
    <property type="entry name" value="Anticodon-binding domain of a subclass of class I aminoacyl-tRNA synthetases"/>
    <property type="match status" value="1"/>
</dbReference>
<dbReference type="SUPFAM" id="SSF55190">
    <property type="entry name" value="Arginyl-tRNA synthetase (ArgRS), N-terminal 'additional' domain"/>
    <property type="match status" value="1"/>
</dbReference>
<dbReference type="SUPFAM" id="SSF52374">
    <property type="entry name" value="Nucleotidylyl transferase"/>
    <property type="match status" value="1"/>
</dbReference>
<dbReference type="PROSITE" id="PS00178">
    <property type="entry name" value="AA_TRNA_LIGASE_I"/>
    <property type="match status" value="1"/>
</dbReference>
<accession>Q8Z5V7</accession>
<organism>
    <name type="scientific">Salmonella typhi</name>
    <dbReference type="NCBI Taxonomy" id="90370"/>
    <lineage>
        <taxon>Bacteria</taxon>
        <taxon>Pseudomonadati</taxon>
        <taxon>Pseudomonadota</taxon>
        <taxon>Gammaproteobacteria</taxon>
        <taxon>Enterobacterales</taxon>
        <taxon>Enterobacteriaceae</taxon>
        <taxon>Salmonella</taxon>
    </lineage>
</organism>
<evidence type="ECO:0000255" key="1">
    <source>
        <dbReference type="HAMAP-Rule" id="MF_00123"/>
    </source>
</evidence>
<protein>
    <recommendedName>
        <fullName evidence="1">Arginine--tRNA ligase</fullName>
        <ecNumber evidence="1">6.1.1.19</ecNumber>
    </recommendedName>
    <alternativeName>
        <fullName evidence="1">Arginyl-tRNA synthetase</fullName>
        <shortName evidence="1">ArgRS</shortName>
    </alternativeName>
</protein>